<keyword id="KW-1185">Reference proteome</keyword>
<keyword id="KW-0687">Ribonucleoprotein</keyword>
<keyword id="KW-0689">Ribosomal protein</keyword>
<keyword id="KW-0694">RNA-binding</keyword>
<keyword id="KW-0699">rRNA-binding</keyword>
<protein>
    <recommendedName>
        <fullName evidence="1">Small ribosomal subunit protein uS14</fullName>
    </recommendedName>
    <alternativeName>
        <fullName evidence="2">30S ribosomal protein S14</fullName>
    </alternativeName>
</protein>
<accession>Q12SU6</accession>
<name>RS14_SHEDO</name>
<evidence type="ECO:0000255" key="1">
    <source>
        <dbReference type="HAMAP-Rule" id="MF_00537"/>
    </source>
</evidence>
<evidence type="ECO:0000305" key="2"/>
<organism>
    <name type="scientific">Shewanella denitrificans (strain OS217 / ATCC BAA-1090 / DSM 15013)</name>
    <dbReference type="NCBI Taxonomy" id="318161"/>
    <lineage>
        <taxon>Bacteria</taxon>
        <taxon>Pseudomonadati</taxon>
        <taxon>Pseudomonadota</taxon>
        <taxon>Gammaproteobacteria</taxon>
        <taxon>Alteromonadales</taxon>
        <taxon>Shewanellaceae</taxon>
        <taxon>Shewanella</taxon>
    </lineage>
</organism>
<dbReference type="EMBL" id="CP000302">
    <property type="protein sequence ID" value="ABE53480.1"/>
    <property type="molecule type" value="Genomic_DNA"/>
</dbReference>
<dbReference type="RefSeq" id="WP_011494647.1">
    <property type="nucleotide sequence ID" value="NC_007954.1"/>
</dbReference>
<dbReference type="SMR" id="Q12SU6"/>
<dbReference type="STRING" id="318161.Sden_0183"/>
<dbReference type="KEGG" id="sdn:Sden_0183"/>
<dbReference type="eggNOG" id="COG0199">
    <property type="taxonomic scope" value="Bacteria"/>
</dbReference>
<dbReference type="HOGENOM" id="CLU_139869_0_1_6"/>
<dbReference type="OrthoDB" id="9810484at2"/>
<dbReference type="Proteomes" id="UP000001982">
    <property type="component" value="Chromosome"/>
</dbReference>
<dbReference type="GO" id="GO:0005737">
    <property type="term" value="C:cytoplasm"/>
    <property type="evidence" value="ECO:0007669"/>
    <property type="project" value="UniProtKB-ARBA"/>
</dbReference>
<dbReference type="GO" id="GO:0015935">
    <property type="term" value="C:small ribosomal subunit"/>
    <property type="evidence" value="ECO:0007669"/>
    <property type="project" value="TreeGrafter"/>
</dbReference>
<dbReference type="GO" id="GO:0019843">
    <property type="term" value="F:rRNA binding"/>
    <property type="evidence" value="ECO:0007669"/>
    <property type="project" value="UniProtKB-UniRule"/>
</dbReference>
<dbReference type="GO" id="GO:0003735">
    <property type="term" value="F:structural constituent of ribosome"/>
    <property type="evidence" value="ECO:0007669"/>
    <property type="project" value="InterPro"/>
</dbReference>
<dbReference type="GO" id="GO:0006412">
    <property type="term" value="P:translation"/>
    <property type="evidence" value="ECO:0007669"/>
    <property type="project" value="UniProtKB-UniRule"/>
</dbReference>
<dbReference type="FunFam" id="1.10.287.1480:FF:000001">
    <property type="entry name" value="30S ribosomal protein S14"/>
    <property type="match status" value="1"/>
</dbReference>
<dbReference type="Gene3D" id="1.10.287.1480">
    <property type="match status" value="1"/>
</dbReference>
<dbReference type="HAMAP" id="MF_00537">
    <property type="entry name" value="Ribosomal_uS14_1"/>
    <property type="match status" value="1"/>
</dbReference>
<dbReference type="InterPro" id="IPR001209">
    <property type="entry name" value="Ribosomal_uS14"/>
</dbReference>
<dbReference type="InterPro" id="IPR023036">
    <property type="entry name" value="Ribosomal_uS14_bac/plastid"/>
</dbReference>
<dbReference type="InterPro" id="IPR018271">
    <property type="entry name" value="Ribosomal_uS14_CS"/>
</dbReference>
<dbReference type="NCBIfam" id="NF006477">
    <property type="entry name" value="PRK08881.1"/>
    <property type="match status" value="1"/>
</dbReference>
<dbReference type="PANTHER" id="PTHR19836">
    <property type="entry name" value="30S RIBOSOMAL PROTEIN S14"/>
    <property type="match status" value="1"/>
</dbReference>
<dbReference type="PANTHER" id="PTHR19836:SF19">
    <property type="entry name" value="SMALL RIBOSOMAL SUBUNIT PROTEIN US14M"/>
    <property type="match status" value="1"/>
</dbReference>
<dbReference type="Pfam" id="PF00253">
    <property type="entry name" value="Ribosomal_S14"/>
    <property type="match status" value="1"/>
</dbReference>
<dbReference type="SUPFAM" id="SSF57716">
    <property type="entry name" value="Glucocorticoid receptor-like (DNA-binding domain)"/>
    <property type="match status" value="1"/>
</dbReference>
<dbReference type="PROSITE" id="PS00527">
    <property type="entry name" value="RIBOSOMAL_S14"/>
    <property type="match status" value="1"/>
</dbReference>
<gene>
    <name evidence="1" type="primary">rpsN</name>
    <name type="ordered locus">Sden_0183</name>
</gene>
<comment type="function">
    <text evidence="1">Binds 16S rRNA, required for the assembly of 30S particles and may also be responsible for determining the conformation of the 16S rRNA at the A site.</text>
</comment>
<comment type="subunit">
    <text evidence="1">Part of the 30S ribosomal subunit. Contacts proteins S3 and S10.</text>
</comment>
<comment type="similarity">
    <text evidence="1">Belongs to the universal ribosomal protein uS14 family.</text>
</comment>
<proteinExistence type="inferred from homology"/>
<reference key="1">
    <citation type="submission" date="2006-03" db="EMBL/GenBank/DDBJ databases">
        <title>Complete sequence of Shewanella denitrificans OS217.</title>
        <authorList>
            <consortium name="US DOE Joint Genome Institute"/>
            <person name="Copeland A."/>
            <person name="Lucas S."/>
            <person name="Lapidus A."/>
            <person name="Barry K."/>
            <person name="Detter J.C."/>
            <person name="Glavina del Rio T."/>
            <person name="Hammon N."/>
            <person name="Israni S."/>
            <person name="Dalin E."/>
            <person name="Tice H."/>
            <person name="Pitluck S."/>
            <person name="Brettin T."/>
            <person name="Bruce D."/>
            <person name="Han C."/>
            <person name="Tapia R."/>
            <person name="Gilna P."/>
            <person name="Kiss H."/>
            <person name="Schmutz J."/>
            <person name="Larimer F."/>
            <person name="Land M."/>
            <person name="Hauser L."/>
            <person name="Kyrpides N."/>
            <person name="Lykidis A."/>
            <person name="Richardson P."/>
        </authorList>
    </citation>
    <scope>NUCLEOTIDE SEQUENCE [LARGE SCALE GENOMIC DNA]</scope>
    <source>
        <strain>OS217 / ATCC BAA-1090 / DSM 15013</strain>
    </source>
</reference>
<sequence length="101" mass="11465">MAKTSMKAREAKRAQLVTKYAEKRLALKAIISAPATSEEDRWDAVLKLQALPRDSSLSRKRNRCSQTGRPHGFLRKFGLSRIKLREATMRGEVPGLRKASW</sequence>
<feature type="chain" id="PRO_1000128573" description="Small ribosomal subunit protein uS14">
    <location>
        <begin position="1"/>
        <end position="101"/>
    </location>
</feature>